<feature type="propeptide" id="PRO_0000431195" evidence="1">
    <location>
        <begin position="1"/>
        <end position="14"/>
    </location>
</feature>
<feature type="chain" id="PRO_0000077525" description="Photosystem II CP43 reaction center protein" evidence="1">
    <location>
        <begin position="15"/>
        <end position="473"/>
    </location>
</feature>
<feature type="transmembrane region" description="Helical" evidence="1">
    <location>
        <begin position="69"/>
        <end position="93"/>
    </location>
</feature>
<feature type="transmembrane region" description="Helical" evidence="1">
    <location>
        <begin position="134"/>
        <end position="155"/>
    </location>
</feature>
<feature type="transmembrane region" description="Helical" evidence="1">
    <location>
        <begin position="178"/>
        <end position="200"/>
    </location>
</feature>
<feature type="transmembrane region" description="Helical" evidence="1">
    <location>
        <begin position="255"/>
        <end position="275"/>
    </location>
</feature>
<feature type="transmembrane region" description="Helical" evidence="1">
    <location>
        <begin position="291"/>
        <end position="312"/>
    </location>
</feature>
<feature type="transmembrane region" description="Helical" evidence="1">
    <location>
        <begin position="447"/>
        <end position="471"/>
    </location>
</feature>
<feature type="binding site" evidence="1">
    <location>
        <position position="367"/>
    </location>
    <ligand>
        <name>[CaMn4O5] cluster</name>
        <dbReference type="ChEBI" id="CHEBI:189552"/>
    </ligand>
</feature>
<feature type="modified residue" description="N-acetylthreonine" evidence="1">
    <location>
        <position position="15"/>
    </location>
</feature>
<feature type="modified residue" description="Phosphothreonine" evidence="1">
    <location>
        <position position="15"/>
    </location>
</feature>
<dbReference type="EMBL" id="D17510">
    <property type="protein sequence ID" value="BAA04424.1"/>
    <property type="molecule type" value="Genomic_DNA"/>
</dbReference>
<dbReference type="PIR" id="T07548">
    <property type="entry name" value="T07548"/>
</dbReference>
<dbReference type="RefSeq" id="NP_042469.1">
    <property type="nucleotide sequence ID" value="NC_001631.1"/>
</dbReference>
<dbReference type="SMR" id="P41643"/>
<dbReference type="GeneID" id="809042"/>
<dbReference type="GO" id="GO:0009535">
    <property type="term" value="C:chloroplast thylakoid membrane"/>
    <property type="evidence" value="ECO:0007669"/>
    <property type="project" value="UniProtKB-SubCell"/>
</dbReference>
<dbReference type="GO" id="GO:0009523">
    <property type="term" value="C:photosystem II"/>
    <property type="evidence" value="ECO:0007669"/>
    <property type="project" value="UniProtKB-KW"/>
</dbReference>
<dbReference type="GO" id="GO:0016168">
    <property type="term" value="F:chlorophyll binding"/>
    <property type="evidence" value="ECO:0007669"/>
    <property type="project" value="UniProtKB-UniRule"/>
</dbReference>
<dbReference type="GO" id="GO:0045156">
    <property type="term" value="F:electron transporter, transferring electrons within the cyclic electron transport pathway of photosynthesis activity"/>
    <property type="evidence" value="ECO:0007669"/>
    <property type="project" value="InterPro"/>
</dbReference>
<dbReference type="GO" id="GO:0046872">
    <property type="term" value="F:metal ion binding"/>
    <property type="evidence" value="ECO:0007669"/>
    <property type="project" value="UniProtKB-KW"/>
</dbReference>
<dbReference type="GO" id="GO:0009772">
    <property type="term" value="P:photosynthetic electron transport in photosystem II"/>
    <property type="evidence" value="ECO:0007669"/>
    <property type="project" value="InterPro"/>
</dbReference>
<dbReference type="FunFam" id="1.10.10.670:FF:000001">
    <property type="entry name" value="Photosystem II CP43 reaction center protein"/>
    <property type="match status" value="1"/>
</dbReference>
<dbReference type="Gene3D" id="1.10.10.670">
    <property type="entry name" value="photosystem ii from thermosynechococcus elongatus"/>
    <property type="match status" value="1"/>
</dbReference>
<dbReference type="HAMAP" id="MF_01496">
    <property type="entry name" value="PSII_PsbC_CP43"/>
    <property type="match status" value="1"/>
</dbReference>
<dbReference type="InterPro" id="IPR000932">
    <property type="entry name" value="PS_antenna-like"/>
</dbReference>
<dbReference type="InterPro" id="IPR036001">
    <property type="entry name" value="PS_II_antenna-like_sf"/>
</dbReference>
<dbReference type="InterPro" id="IPR005869">
    <property type="entry name" value="PSII_PsbC"/>
</dbReference>
<dbReference type="InterPro" id="IPR044900">
    <property type="entry name" value="PSII_PsbC_sf"/>
</dbReference>
<dbReference type="NCBIfam" id="TIGR01153">
    <property type="entry name" value="psbC"/>
    <property type="match status" value="1"/>
</dbReference>
<dbReference type="Pfam" id="PF00421">
    <property type="entry name" value="PSII"/>
    <property type="match status" value="1"/>
</dbReference>
<dbReference type="SUPFAM" id="SSF161077">
    <property type="entry name" value="Photosystem II antenna protein-like"/>
    <property type="match status" value="1"/>
</dbReference>
<evidence type="ECO:0000255" key="1">
    <source>
        <dbReference type="HAMAP-Rule" id="MF_01496"/>
    </source>
</evidence>
<organism>
    <name type="scientific">Pinus thunbergii</name>
    <name type="common">Japanese black pine</name>
    <name type="synonym">Pinus thunbergiana</name>
    <dbReference type="NCBI Taxonomy" id="3350"/>
    <lineage>
        <taxon>Eukaryota</taxon>
        <taxon>Viridiplantae</taxon>
        <taxon>Streptophyta</taxon>
        <taxon>Embryophyta</taxon>
        <taxon>Tracheophyta</taxon>
        <taxon>Spermatophyta</taxon>
        <taxon>Pinopsida</taxon>
        <taxon>Pinidae</taxon>
        <taxon>Conifers I</taxon>
        <taxon>Pinales</taxon>
        <taxon>Pinaceae</taxon>
        <taxon>Pinus</taxon>
        <taxon>Pinus subgen. Pinus</taxon>
    </lineage>
</organism>
<proteinExistence type="inferred from homology"/>
<geneLocation type="chloroplast"/>
<gene>
    <name evidence="1" type="primary">psbC</name>
</gene>
<keyword id="KW-0007">Acetylation</keyword>
<keyword id="KW-0148">Chlorophyll</keyword>
<keyword id="KW-0150">Chloroplast</keyword>
<keyword id="KW-0157">Chromophore</keyword>
<keyword id="KW-0464">Manganese</keyword>
<keyword id="KW-0472">Membrane</keyword>
<keyword id="KW-0479">Metal-binding</keyword>
<keyword id="KW-0597">Phosphoprotein</keyword>
<keyword id="KW-0602">Photosynthesis</keyword>
<keyword id="KW-0604">Photosystem II</keyword>
<keyword id="KW-0934">Plastid</keyword>
<keyword id="KW-0793">Thylakoid</keyword>
<keyword id="KW-0812">Transmembrane</keyword>
<keyword id="KW-1133">Transmembrane helix</keyword>
<reference key="1">
    <citation type="journal article" date="1994" name="Proc. Natl. Acad. Sci. U.S.A.">
        <title>Loss of all ndh genes as determined by sequencing the entire chloroplast genome of the black pine Pinus thunbergii.</title>
        <authorList>
            <person name="Wakasugi T."/>
            <person name="Tsudzuki J."/>
            <person name="Ito S."/>
            <person name="Nakashima K."/>
            <person name="Tsudzuki T."/>
            <person name="Sugiura M."/>
        </authorList>
    </citation>
    <scope>NUCLEOTIDE SEQUENCE [LARGE SCALE GENOMIC DNA]</scope>
</reference>
<accession>P41643</accession>
<sequence>MKTLYSLRRSYPVETLFNGTIALAGRDQETTGFAWWAGNARLINLSGKLLGAHVAHAGLIVFWAGAMNLFEVAHFVPEKPMYEQGLILLPHLATLGWGVGPGGEIVDTFPYFVSGVLHLISSAVLGFGGIYHALIGPETLEESFPFFGYVWKDRNKMTTILGIHLILLGVGAFLPVLKALYFGGVYDTWAPGGGDVRKITNPTLNPSAIFGYLLKSPFGGEGWIVSVDNLEDVIGGHVWLGSICIFGGIWHILTKPFAWARRAFVWSGEAYLSYSLAALSLFGFIACCFVWFNNTVYPSEFYGPTGPEASQAQAFTFLVRDQRLGASVGSAQGPTGLGKYLMRSPTGEIIFGGETMRFWDLRAPWLEPLRGPNGLDLSKLRKDIQPWQERRSAEYMTHAPLGSLNSVGGVATEINAVNYVSPRSWLSTSHFVLGFFFFVGHLWHAGRARAAAAGFEKGIDRDFEPVLSMTPLN</sequence>
<protein>
    <recommendedName>
        <fullName evidence="1">Photosystem II CP43 reaction center protein</fullName>
    </recommendedName>
    <alternativeName>
        <fullName evidence="1">PSII 43 kDa protein</fullName>
    </alternativeName>
    <alternativeName>
        <fullName evidence="1">Protein CP-43</fullName>
    </alternativeName>
</protein>
<comment type="function">
    <text evidence="1">One of the components of the core complex of photosystem II (PSII). It binds chlorophyll and helps catalyze the primary light-induced photochemical processes of PSII. PSII is a light-driven water:plastoquinone oxidoreductase, using light energy to abstract electrons from H(2)O, generating O(2) and a proton gradient subsequently used for ATP formation.</text>
</comment>
<comment type="cofactor">
    <text evidence="1">Binds multiple chlorophylls and provides some of the ligands for the Ca-4Mn-5O cluster of the oxygen-evolving complex. It may also provide a ligand for a Cl- that is required for oxygen evolution. PSII binds additional chlorophylls, carotenoids and specific lipids.</text>
</comment>
<comment type="subunit">
    <text evidence="1">PSII is composed of 1 copy each of membrane proteins PsbA, PsbB, PsbC, PsbD, PsbE, PsbF, PsbH, PsbI, PsbJ, PsbK, PsbL, PsbM, PsbT, PsbX, PsbY, PsbZ, Psb30/Ycf12, at least 3 peripheral proteins of the oxygen-evolving complex and a large number of cofactors. It forms dimeric complexes.</text>
</comment>
<comment type="subcellular location">
    <subcellularLocation>
        <location evidence="1">Plastid</location>
        <location evidence="1">Chloroplast thylakoid membrane</location>
        <topology evidence="1">Multi-pass membrane protein</topology>
    </subcellularLocation>
</comment>
<comment type="similarity">
    <text evidence="1">Belongs to the PsbB/PsbC family. PsbC subfamily.</text>
</comment>
<name>PSBC_PINTH</name>